<name>RIMP_SINFN</name>
<sequence>MSDPTTAEIANEPRLITETGLDRRIADIIEPVLVQMGFRLVRVRMSGQNGLTLQIMTERNDGTMTVEDCEDVSKAVSPVLDVEDPIDKAYHLEVSSPGIDRPMVRKSDFVRWQGHLMKCETSIMVDGRKRFRGKIVSVDEEGFRLERDQPAYGEEAVVAIPFTALSDARLILTDDLIRDALAADKKAKAARAANENFEDEDRDIE</sequence>
<gene>
    <name evidence="1" type="primary">rimP</name>
    <name type="ordered locus">NGR_c35650</name>
</gene>
<reference key="1">
    <citation type="journal article" date="2009" name="Appl. Environ. Microbiol.">
        <title>Rhizobium sp. strain NGR234 possesses a remarkable number of secretion systems.</title>
        <authorList>
            <person name="Schmeisser C."/>
            <person name="Liesegang H."/>
            <person name="Krysciak D."/>
            <person name="Bakkou N."/>
            <person name="Le Quere A."/>
            <person name="Wollherr A."/>
            <person name="Heinemeyer I."/>
            <person name="Morgenstern B."/>
            <person name="Pommerening-Roeser A."/>
            <person name="Flores M."/>
            <person name="Palacios R."/>
            <person name="Brenner S."/>
            <person name="Gottschalk G."/>
            <person name="Schmitz R.A."/>
            <person name="Broughton W.J."/>
            <person name="Perret X."/>
            <person name="Strittmatter A.W."/>
            <person name="Streit W.R."/>
        </authorList>
    </citation>
    <scope>NUCLEOTIDE SEQUENCE [LARGE SCALE GENOMIC DNA]</scope>
    <source>
        <strain>NBRC 101917 / NGR234</strain>
    </source>
</reference>
<feature type="chain" id="PRO_1000149801" description="Ribosome maturation factor RimP">
    <location>
        <begin position="1"/>
        <end position="205"/>
    </location>
</feature>
<organism>
    <name type="scientific">Sinorhizobium fredii (strain NBRC 101917 / NGR234)</name>
    <dbReference type="NCBI Taxonomy" id="394"/>
    <lineage>
        <taxon>Bacteria</taxon>
        <taxon>Pseudomonadati</taxon>
        <taxon>Pseudomonadota</taxon>
        <taxon>Alphaproteobacteria</taxon>
        <taxon>Hyphomicrobiales</taxon>
        <taxon>Rhizobiaceae</taxon>
        <taxon>Sinorhizobium/Ensifer group</taxon>
        <taxon>Sinorhizobium</taxon>
    </lineage>
</organism>
<evidence type="ECO:0000255" key="1">
    <source>
        <dbReference type="HAMAP-Rule" id="MF_01077"/>
    </source>
</evidence>
<comment type="function">
    <text evidence="1">Required for maturation of 30S ribosomal subunits.</text>
</comment>
<comment type="subcellular location">
    <subcellularLocation>
        <location evidence="1">Cytoplasm</location>
    </subcellularLocation>
</comment>
<comment type="similarity">
    <text evidence="1">Belongs to the RimP family.</text>
</comment>
<accession>C3MC63</accession>
<dbReference type="EMBL" id="CP001389">
    <property type="protein sequence ID" value="ACP27288.1"/>
    <property type="molecule type" value="Genomic_DNA"/>
</dbReference>
<dbReference type="RefSeq" id="WP_012710033.1">
    <property type="nucleotide sequence ID" value="NC_012587.1"/>
</dbReference>
<dbReference type="RefSeq" id="YP_002828041.1">
    <property type="nucleotide sequence ID" value="NC_012587.1"/>
</dbReference>
<dbReference type="SMR" id="C3MC63"/>
<dbReference type="STRING" id="394.NGR_c35650"/>
<dbReference type="KEGG" id="rhi:NGR_c35650"/>
<dbReference type="PATRIC" id="fig|394.7.peg.6416"/>
<dbReference type="eggNOG" id="COG0779">
    <property type="taxonomic scope" value="Bacteria"/>
</dbReference>
<dbReference type="HOGENOM" id="CLU_070525_0_1_5"/>
<dbReference type="OrthoDB" id="9805006at2"/>
<dbReference type="Proteomes" id="UP000001054">
    <property type="component" value="Chromosome"/>
</dbReference>
<dbReference type="GO" id="GO:0005829">
    <property type="term" value="C:cytosol"/>
    <property type="evidence" value="ECO:0007669"/>
    <property type="project" value="TreeGrafter"/>
</dbReference>
<dbReference type="GO" id="GO:0000028">
    <property type="term" value="P:ribosomal small subunit assembly"/>
    <property type="evidence" value="ECO:0007669"/>
    <property type="project" value="TreeGrafter"/>
</dbReference>
<dbReference type="GO" id="GO:0006412">
    <property type="term" value="P:translation"/>
    <property type="evidence" value="ECO:0007669"/>
    <property type="project" value="TreeGrafter"/>
</dbReference>
<dbReference type="CDD" id="cd01734">
    <property type="entry name" value="YlxS_C"/>
    <property type="match status" value="1"/>
</dbReference>
<dbReference type="FunFam" id="3.30.300.70:FF:000001">
    <property type="entry name" value="Ribosome maturation factor RimP"/>
    <property type="match status" value="1"/>
</dbReference>
<dbReference type="Gene3D" id="2.30.30.180">
    <property type="entry name" value="Ribosome maturation factor RimP, C-terminal domain"/>
    <property type="match status" value="1"/>
</dbReference>
<dbReference type="Gene3D" id="3.30.300.70">
    <property type="entry name" value="RimP-like superfamily, N-terminal"/>
    <property type="match status" value="1"/>
</dbReference>
<dbReference type="HAMAP" id="MF_01077">
    <property type="entry name" value="RimP"/>
    <property type="match status" value="1"/>
</dbReference>
<dbReference type="InterPro" id="IPR003728">
    <property type="entry name" value="Ribosome_maturation_RimP"/>
</dbReference>
<dbReference type="InterPro" id="IPR028998">
    <property type="entry name" value="RimP_C"/>
</dbReference>
<dbReference type="InterPro" id="IPR036847">
    <property type="entry name" value="RimP_C_sf"/>
</dbReference>
<dbReference type="InterPro" id="IPR028989">
    <property type="entry name" value="RimP_N"/>
</dbReference>
<dbReference type="InterPro" id="IPR035956">
    <property type="entry name" value="RimP_N_sf"/>
</dbReference>
<dbReference type="NCBIfam" id="NF000932">
    <property type="entry name" value="PRK00092.2-5"/>
    <property type="match status" value="1"/>
</dbReference>
<dbReference type="PANTHER" id="PTHR33867">
    <property type="entry name" value="RIBOSOME MATURATION FACTOR RIMP"/>
    <property type="match status" value="1"/>
</dbReference>
<dbReference type="PANTHER" id="PTHR33867:SF1">
    <property type="entry name" value="RIBOSOME MATURATION FACTOR RIMP"/>
    <property type="match status" value="1"/>
</dbReference>
<dbReference type="Pfam" id="PF17384">
    <property type="entry name" value="DUF150_C"/>
    <property type="match status" value="1"/>
</dbReference>
<dbReference type="Pfam" id="PF02576">
    <property type="entry name" value="RimP_N"/>
    <property type="match status" value="1"/>
</dbReference>
<dbReference type="SUPFAM" id="SSF74942">
    <property type="entry name" value="YhbC-like, C-terminal domain"/>
    <property type="match status" value="1"/>
</dbReference>
<dbReference type="SUPFAM" id="SSF75420">
    <property type="entry name" value="YhbC-like, N-terminal domain"/>
    <property type="match status" value="1"/>
</dbReference>
<keyword id="KW-0963">Cytoplasm</keyword>
<keyword id="KW-1185">Reference proteome</keyword>
<keyword id="KW-0690">Ribosome biogenesis</keyword>
<protein>
    <recommendedName>
        <fullName evidence="1">Ribosome maturation factor RimP</fullName>
    </recommendedName>
</protein>
<proteinExistence type="inferred from homology"/>